<reference key="1">
    <citation type="journal article" date="2002" name="J. Bacteriol.">
        <title>Whole-genome comparison of Mycobacterium tuberculosis clinical and laboratory strains.</title>
        <authorList>
            <person name="Fleischmann R.D."/>
            <person name="Alland D."/>
            <person name="Eisen J.A."/>
            <person name="Carpenter L."/>
            <person name="White O."/>
            <person name="Peterson J.D."/>
            <person name="DeBoy R.T."/>
            <person name="Dodson R.J."/>
            <person name="Gwinn M.L."/>
            <person name="Haft D.H."/>
            <person name="Hickey E.K."/>
            <person name="Kolonay J.F."/>
            <person name="Nelson W.C."/>
            <person name="Umayam L.A."/>
            <person name="Ermolaeva M.D."/>
            <person name="Salzberg S.L."/>
            <person name="Delcher A."/>
            <person name="Utterback T.R."/>
            <person name="Weidman J.F."/>
            <person name="Khouri H.M."/>
            <person name="Gill J."/>
            <person name="Mikula A."/>
            <person name="Bishai W."/>
            <person name="Jacobs W.R. Jr."/>
            <person name="Venter J.C."/>
            <person name="Fraser C.M."/>
        </authorList>
    </citation>
    <scope>NUCLEOTIDE SEQUENCE [LARGE SCALE GENOMIC DNA]</scope>
    <source>
        <strain>CDC 1551 / Oshkosh</strain>
    </source>
</reference>
<proteinExistence type="inferred from homology"/>
<dbReference type="EC" id="2.5.1.15"/>
<dbReference type="EMBL" id="AE000516">
    <property type="protein sequence ID" value="AAK48071.1"/>
    <property type="status" value="ALT_INIT"/>
    <property type="molecule type" value="Genomic_DNA"/>
</dbReference>
<dbReference type="PIR" id="A70956">
    <property type="entry name" value="A70956"/>
</dbReference>
<dbReference type="SMR" id="P9WND0"/>
<dbReference type="KEGG" id="mtc:MT3712"/>
<dbReference type="PATRIC" id="fig|83331.31.peg.3996"/>
<dbReference type="HOGENOM" id="CLU_008023_0_1_11"/>
<dbReference type="UniPathway" id="UPA00077">
    <property type="reaction ID" value="UER00156"/>
</dbReference>
<dbReference type="Proteomes" id="UP000001020">
    <property type="component" value="Chromosome"/>
</dbReference>
<dbReference type="GO" id="GO:0005829">
    <property type="term" value="C:cytosol"/>
    <property type="evidence" value="ECO:0007669"/>
    <property type="project" value="TreeGrafter"/>
</dbReference>
<dbReference type="GO" id="GO:0004156">
    <property type="term" value="F:dihydropteroate synthase activity"/>
    <property type="evidence" value="ECO:0007669"/>
    <property type="project" value="UniProtKB-EC"/>
</dbReference>
<dbReference type="GO" id="GO:0046872">
    <property type="term" value="F:metal ion binding"/>
    <property type="evidence" value="ECO:0007669"/>
    <property type="project" value="UniProtKB-KW"/>
</dbReference>
<dbReference type="GO" id="GO:0046656">
    <property type="term" value="P:folic acid biosynthetic process"/>
    <property type="evidence" value="ECO:0007669"/>
    <property type="project" value="UniProtKB-KW"/>
</dbReference>
<dbReference type="GO" id="GO:0046654">
    <property type="term" value="P:tetrahydrofolate biosynthetic process"/>
    <property type="evidence" value="ECO:0007669"/>
    <property type="project" value="UniProtKB-UniPathway"/>
</dbReference>
<dbReference type="CDD" id="cd00739">
    <property type="entry name" value="DHPS"/>
    <property type="match status" value="1"/>
</dbReference>
<dbReference type="FunFam" id="3.20.20.20:FF:000006">
    <property type="entry name" value="Dihydropteroate synthase"/>
    <property type="match status" value="1"/>
</dbReference>
<dbReference type="Gene3D" id="3.20.20.20">
    <property type="entry name" value="Dihydropteroate synthase-like"/>
    <property type="match status" value="1"/>
</dbReference>
<dbReference type="InterPro" id="IPR045031">
    <property type="entry name" value="DHP_synth-like"/>
</dbReference>
<dbReference type="InterPro" id="IPR006390">
    <property type="entry name" value="DHP_synth_dom"/>
</dbReference>
<dbReference type="InterPro" id="IPR011005">
    <property type="entry name" value="Dihydropteroate_synth-like_sf"/>
</dbReference>
<dbReference type="InterPro" id="IPR000489">
    <property type="entry name" value="Pterin-binding_dom"/>
</dbReference>
<dbReference type="NCBIfam" id="TIGR01496">
    <property type="entry name" value="DHPS"/>
    <property type="match status" value="1"/>
</dbReference>
<dbReference type="PANTHER" id="PTHR20941">
    <property type="entry name" value="FOLATE SYNTHESIS PROTEINS"/>
    <property type="match status" value="1"/>
</dbReference>
<dbReference type="PANTHER" id="PTHR20941:SF1">
    <property type="entry name" value="FOLIC ACID SYNTHESIS PROTEIN FOL1"/>
    <property type="match status" value="1"/>
</dbReference>
<dbReference type="Pfam" id="PF00809">
    <property type="entry name" value="Pterin_bind"/>
    <property type="match status" value="1"/>
</dbReference>
<dbReference type="SUPFAM" id="SSF51717">
    <property type="entry name" value="Dihydropteroate synthetase-like"/>
    <property type="match status" value="1"/>
</dbReference>
<dbReference type="PROSITE" id="PS00792">
    <property type="entry name" value="DHPS_1"/>
    <property type="match status" value="1"/>
</dbReference>
<dbReference type="PROSITE" id="PS00793">
    <property type="entry name" value="DHPS_2"/>
    <property type="match status" value="1"/>
</dbReference>
<dbReference type="PROSITE" id="PS50972">
    <property type="entry name" value="PTERIN_BINDING"/>
    <property type="match status" value="1"/>
</dbReference>
<protein>
    <recommendedName>
        <fullName>Dihydropteroate synthase</fullName>
        <shortName>DHPS</shortName>
        <ecNumber>2.5.1.15</ecNumber>
    </recommendedName>
    <alternativeName>
        <fullName>Dihydropteroate pyrophosphorylase</fullName>
    </alternativeName>
</protein>
<accession>P9WND0</accession>
<accession>L0TG01</accession>
<accession>O06274</accession>
<accession>P0A578</accession>
<keyword id="KW-0289">Folate biosynthesis</keyword>
<keyword id="KW-0460">Magnesium</keyword>
<keyword id="KW-0479">Metal-binding</keyword>
<keyword id="KW-1185">Reference proteome</keyword>
<keyword id="KW-0808">Transferase</keyword>
<evidence type="ECO:0000250" key="1">
    <source>
        <dbReference type="UniProtKB" id="P9WND1"/>
    </source>
</evidence>
<evidence type="ECO:0000255" key="2">
    <source>
        <dbReference type="PROSITE-ProRule" id="PRU00334"/>
    </source>
</evidence>
<evidence type="ECO:0000305" key="3"/>
<feature type="chain" id="PRO_0000427148" description="Dihydropteroate synthase">
    <location>
        <begin position="1"/>
        <end position="280"/>
    </location>
</feature>
<feature type="domain" description="Pterin-binding" evidence="2">
    <location>
        <begin position="1"/>
        <end position="265"/>
    </location>
</feature>
<feature type="binding site" evidence="1">
    <location>
        <position position="13"/>
    </location>
    <ligand>
        <name>Mg(2+)</name>
        <dbReference type="ChEBI" id="CHEBI:18420"/>
    </ligand>
</feature>
<feature type="binding site" evidence="1">
    <location>
        <position position="86"/>
    </location>
    <ligand>
        <name>(7,8-dihydropterin-6-yl)methyl diphosphate</name>
        <dbReference type="ChEBI" id="CHEBI:72950"/>
    </ligand>
</feature>
<feature type="binding site" evidence="1">
    <location>
        <position position="105"/>
    </location>
    <ligand>
        <name>(7,8-dihydropterin-6-yl)methyl diphosphate</name>
        <dbReference type="ChEBI" id="CHEBI:72950"/>
    </ligand>
</feature>
<feature type="binding site" evidence="1">
    <location>
        <position position="177"/>
    </location>
    <ligand>
        <name>(7,8-dihydropterin-6-yl)methyl diphosphate</name>
        <dbReference type="ChEBI" id="CHEBI:72950"/>
    </ligand>
</feature>
<feature type="binding site" evidence="1">
    <location>
        <position position="213"/>
    </location>
    <ligand>
        <name>(7,8-dihydropterin-6-yl)methyl diphosphate</name>
        <dbReference type="ChEBI" id="CHEBI:72950"/>
    </ligand>
</feature>
<feature type="binding site" evidence="1">
    <location>
        <begin position="253"/>
        <end position="255"/>
    </location>
    <ligand>
        <name>(7,8-dihydropterin-6-yl)methyl diphosphate</name>
        <dbReference type="ChEBI" id="CHEBI:72950"/>
    </ligand>
</feature>
<organism>
    <name type="scientific">Mycobacterium tuberculosis (strain CDC 1551 / Oshkosh)</name>
    <dbReference type="NCBI Taxonomy" id="83331"/>
    <lineage>
        <taxon>Bacteria</taxon>
        <taxon>Bacillati</taxon>
        <taxon>Actinomycetota</taxon>
        <taxon>Actinomycetes</taxon>
        <taxon>Mycobacteriales</taxon>
        <taxon>Mycobacteriaceae</taxon>
        <taxon>Mycobacterium</taxon>
        <taxon>Mycobacterium tuberculosis complex</taxon>
    </lineage>
</organism>
<gene>
    <name type="primary">folP1</name>
    <name type="ordered locus">MT3712</name>
</gene>
<sequence length="280" mass="28843">MSPAPVQVMGVLNVTDDSFSDGGCYLDLDDAVKHGLAMAAAGAGIVDVGGESSRPGATRVDPAVETSRVIPVVKELAAQGITVSIDTMRADVARAALQNGAQMVNDVSGGRADPAMGPLLAEADVPWVLMHWRAVSADTPHVPVRYGNVVAEVRADLLASVADAVAAGVDPARLVLDPGLGFAKTAQHNWAILHALPELVATGIPVLVGASRKRFLGALLAGPDGVMRPTDGRDTATAVISALAALHGAWGVRVHDVRASVDAIKVVEAWMGAERIERDG</sequence>
<name>DHPS1_MYCTO</name>
<comment type="function">
    <text evidence="1">Catalyzes the condensation of para-aminobenzoate (pABA) with 6-hydroxymethyl-7,8-dihydropterin diphosphate (DHPt-PP) to form 7,8-dihydropteroate (H2Pte), the immediate precursor of folate derivatives.</text>
</comment>
<comment type="function">
    <text evidence="1">Is involved in the bioactivation of the antituberculous drug para-aminosalicylic acid (PAS). PAS is a close structural analog of pABA and acts as an alternative substrate for DHPS, leading to hydroxy-dihydropteroate (H2PtePAS). Metabolomic studies show that PAS, despite its in vitro activity as a competitive inhibitor of DHPS, does not inhibit growth of M.tuberculosis by inhibiting DHPS. PAS exerts its antimycobacterial activity through its effects on M.tuberculosis folate metabolism downstream of DHPS. PAS poisons folate-dependent pathways not only by serving as a replacement substrate for DHPS but also by the products of that reaction serving as replacement substrates and/or inhibitors of subsequent enzymes.</text>
</comment>
<comment type="catalytic activity">
    <reaction evidence="1">
        <text>(7,8-dihydropterin-6-yl)methyl diphosphate + 4-aminobenzoate = 7,8-dihydropteroate + diphosphate</text>
        <dbReference type="Rhea" id="RHEA:19949"/>
        <dbReference type="ChEBI" id="CHEBI:17836"/>
        <dbReference type="ChEBI" id="CHEBI:17839"/>
        <dbReference type="ChEBI" id="CHEBI:33019"/>
        <dbReference type="ChEBI" id="CHEBI:72950"/>
        <dbReference type="EC" id="2.5.1.15"/>
    </reaction>
</comment>
<comment type="catalytic activity">
    <reaction evidence="1">
        <text>4-aminosalicylate + (7,8-dihydropterin-6-yl)methyl diphosphate = 2-hydroxy-7,8-dihydropteroate + diphosphate</text>
        <dbReference type="Rhea" id="RHEA:53732"/>
        <dbReference type="ChEBI" id="CHEBI:33019"/>
        <dbReference type="ChEBI" id="CHEBI:72950"/>
        <dbReference type="ChEBI" id="CHEBI:137598"/>
        <dbReference type="ChEBI" id="CHEBI:137600"/>
    </reaction>
</comment>
<comment type="cofactor">
    <cofactor evidence="1">
        <name>Mg(2+)</name>
        <dbReference type="ChEBI" id="CHEBI:18420"/>
    </cofactor>
</comment>
<comment type="pathway">
    <text>Cofactor biosynthesis; tetrahydrofolate biosynthesis; 7,8-dihydrofolate from 2-amino-4-hydroxy-6-hydroxymethyl-7,8-dihydropteridine diphosphate and 4-aminobenzoate: step 1/2.</text>
</comment>
<comment type="subunit">
    <text evidence="1">Homodimer.</text>
</comment>
<comment type="similarity">
    <text evidence="3">Belongs to the DHPS family.</text>
</comment>
<comment type="sequence caution" evidence="3">
    <conflict type="erroneous initiation">
        <sequence resource="EMBL-CDS" id="AAK48071"/>
    </conflict>
    <text>Truncated N-terminus.</text>
</comment>